<protein>
    <recommendedName>
        <fullName evidence="1">Homoserine kinase</fullName>
        <shortName evidence="1">HK</shortName>
        <shortName evidence="1">HSK</shortName>
        <ecNumber evidence="1">2.7.1.39</ecNumber>
    </recommendedName>
</protein>
<proteinExistence type="inferred from homology"/>
<evidence type="ECO:0000255" key="1">
    <source>
        <dbReference type="HAMAP-Rule" id="MF_00384"/>
    </source>
</evidence>
<sequence length="292" mass="32555">MKILVPATSANLGPGFDCLGLSLKLFNETQIQKSGVFSISIGGEGSDNIFLKKNNIFVNIFYEIYEKLSGKKDNFRFIFQNNIPLSRGLGSSSAVIVGAIASAYYMSGFKVEKERILDEALIYENHPDNIAPATLGGFVCSLVEKNKVYSIKKEIDKDLAAVVVIPNLAMSTEQSRQALAKNLSFNDAVFNLSHASFLTACFLEKKYEFLKFASQDKLHEINRMKNLPELFEVQKFALENKALMSTLSGSGSSFFSLAFKDDALALAKKIQTKFKDFRVQYLEFDDNGFEIC</sequence>
<accession>A1VXL7</accession>
<comment type="function">
    <text evidence="1">Catalyzes the ATP-dependent phosphorylation of L-homoserine to L-homoserine phosphate.</text>
</comment>
<comment type="catalytic activity">
    <reaction evidence="1">
        <text>L-homoserine + ATP = O-phospho-L-homoserine + ADP + H(+)</text>
        <dbReference type="Rhea" id="RHEA:13985"/>
        <dbReference type="ChEBI" id="CHEBI:15378"/>
        <dbReference type="ChEBI" id="CHEBI:30616"/>
        <dbReference type="ChEBI" id="CHEBI:57476"/>
        <dbReference type="ChEBI" id="CHEBI:57590"/>
        <dbReference type="ChEBI" id="CHEBI:456216"/>
        <dbReference type="EC" id="2.7.1.39"/>
    </reaction>
</comment>
<comment type="pathway">
    <text evidence="1">Amino-acid biosynthesis; L-threonine biosynthesis; L-threonine from L-aspartate: step 4/5.</text>
</comment>
<comment type="subcellular location">
    <subcellularLocation>
        <location evidence="1">Cytoplasm</location>
    </subcellularLocation>
</comment>
<comment type="similarity">
    <text evidence="1">Belongs to the GHMP kinase family. Homoserine kinase subfamily.</text>
</comment>
<gene>
    <name evidence="1" type="primary">thrB</name>
    <name type="ordered locus">CJJ81176_0169</name>
</gene>
<dbReference type="EC" id="2.7.1.39" evidence="1"/>
<dbReference type="EMBL" id="CP000538">
    <property type="protein sequence ID" value="EAQ73367.1"/>
    <property type="molecule type" value="Genomic_DNA"/>
</dbReference>
<dbReference type="RefSeq" id="WP_002851909.1">
    <property type="nucleotide sequence ID" value="NC_008787.1"/>
</dbReference>
<dbReference type="SMR" id="A1VXL7"/>
<dbReference type="KEGG" id="cjj:CJJ81176_0169"/>
<dbReference type="eggNOG" id="COG0083">
    <property type="taxonomic scope" value="Bacteria"/>
</dbReference>
<dbReference type="HOGENOM" id="CLU_041243_0_0_7"/>
<dbReference type="UniPathway" id="UPA00050">
    <property type="reaction ID" value="UER00064"/>
</dbReference>
<dbReference type="Proteomes" id="UP000000646">
    <property type="component" value="Chromosome"/>
</dbReference>
<dbReference type="GO" id="GO:0005737">
    <property type="term" value="C:cytoplasm"/>
    <property type="evidence" value="ECO:0007669"/>
    <property type="project" value="UniProtKB-SubCell"/>
</dbReference>
<dbReference type="GO" id="GO:0005524">
    <property type="term" value="F:ATP binding"/>
    <property type="evidence" value="ECO:0007669"/>
    <property type="project" value="UniProtKB-UniRule"/>
</dbReference>
<dbReference type="GO" id="GO:0004413">
    <property type="term" value="F:homoserine kinase activity"/>
    <property type="evidence" value="ECO:0007669"/>
    <property type="project" value="UniProtKB-UniRule"/>
</dbReference>
<dbReference type="GO" id="GO:0009088">
    <property type="term" value="P:threonine biosynthetic process"/>
    <property type="evidence" value="ECO:0007669"/>
    <property type="project" value="UniProtKB-UniRule"/>
</dbReference>
<dbReference type="Gene3D" id="3.30.230.10">
    <property type="match status" value="1"/>
</dbReference>
<dbReference type="Gene3D" id="3.30.70.890">
    <property type="entry name" value="GHMP kinase, C-terminal domain"/>
    <property type="match status" value="1"/>
</dbReference>
<dbReference type="HAMAP" id="MF_00384">
    <property type="entry name" value="Homoser_kinase"/>
    <property type="match status" value="1"/>
</dbReference>
<dbReference type="InterPro" id="IPR013750">
    <property type="entry name" value="GHMP_kinase_C_dom"/>
</dbReference>
<dbReference type="InterPro" id="IPR036554">
    <property type="entry name" value="GHMP_kinase_C_sf"/>
</dbReference>
<dbReference type="InterPro" id="IPR006204">
    <property type="entry name" value="GHMP_kinase_N_dom"/>
</dbReference>
<dbReference type="InterPro" id="IPR006203">
    <property type="entry name" value="GHMP_knse_ATP-bd_CS"/>
</dbReference>
<dbReference type="InterPro" id="IPR000870">
    <property type="entry name" value="Homoserine_kinase"/>
</dbReference>
<dbReference type="InterPro" id="IPR020568">
    <property type="entry name" value="Ribosomal_Su5_D2-typ_SF"/>
</dbReference>
<dbReference type="InterPro" id="IPR014721">
    <property type="entry name" value="Ribsml_uS5_D2-typ_fold_subgr"/>
</dbReference>
<dbReference type="NCBIfam" id="TIGR00191">
    <property type="entry name" value="thrB"/>
    <property type="match status" value="1"/>
</dbReference>
<dbReference type="PANTHER" id="PTHR20861:SF1">
    <property type="entry name" value="HOMOSERINE KINASE"/>
    <property type="match status" value="1"/>
</dbReference>
<dbReference type="PANTHER" id="PTHR20861">
    <property type="entry name" value="HOMOSERINE/4-DIPHOSPHOCYTIDYL-2-C-METHYL-D-ERYTHRITOL KINASE"/>
    <property type="match status" value="1"/>
</dbReference>
<dbReference type="Pfam" id="PF08544">
    <property type="entry name" value="GHMP_kinases_C"/>
    <property type="match status" value="1"/>
</dbReference>
<dbReference type="Pfam" id="PF00288">
    <property type="entry name" value="GHMP_kinases_N"/>
    <property type="match status" value="1"/>
</dbReference>
<dbReference type="PIRSF" id="PIRSF000676">
    <property type="entry name" value="Homoser_kin"/>
    <property type="match status" value="1"/>
</dbReference>
<dbReference type="PRINTS" id="PR00958">
    <property type="entry name" value="HOMSERKINASE"/>
</dbReference>
<dbReference type="SUPFAM" id="SSF55060">
    <property type="entry name" value="GHMP Kinase, C-terminal domain"/>
    <property type="match status" value="1"/>
</dbReference>
<dbReference type="SUPFAM" id="SSF54211">
    <property type="entry name" value="Ribosomal protein S5 domain 2-like"/>
    <property type="match status" value="1"/>
</dbReference>
<dbReference type="PROSITE" id="PS00627">
    <property type="entry name" value="GHMP_KINASES_ATP"/>
    <property type="match status" value="1"/>
</dbReference>
<feature type="chain" id="PRO_1000049117" description="Homoserine kinase">
    <location>
        <begin position="1"/>
        <end position="292"/>
    </location>
</feature>
<feature type="binding site" evidence="1">
    <location>
        <begin position="84"/>
        <end position="94"/>
    </location>
    <ligand>
        <name>ATP</name>
        <dbReference type="ChEBI" id="CHEBI:30616"/>
    </ligand>
</feature>
<keyword id="KW-0028">Amino-acid biosynthesis</keyword>
<keyword id="KW-0067">ATP-binding</keyword>
<keyword id="KW-0963">Cytoplasm</keyword>
<keyword id="KW-0418">Kinase</keyword>
<keyword id="KW-0547">Nucleotide-binding</keyword>
<keyword id="KW-0791">Threonine biosynthesis</keyword>
<keyword id="KW-0808">Transferase</keyword>
<reference key="1">
    <citation type="submission" date="2006-12" db="EMBL/GenBank/DDBJ databases">
        <authorList>
            <person name="Fouts D.E."/>
            <person name="Nelson K.E."/>
            <person name="Sebastian Y."/>
        </authorList>
    </citation>
    <scope>NUCLEOTIDE SEQUENCE [LARGE SCALE GENOMIC DNA]</scope>
    <source>
        <strain>81-176</strain>
    </source>
</reference>
<organism>
    <name type="scientific">Campylobacter jejuni subsp. jejuni serotype O:23/36 (strain 81-176)</name>
    <dbReference type="NCBI Taxonomy" id="354242"/>
    <lineage>
        <taxon>Bacteria</taxon>
        <taxon>Pseudomonadati</taxon>
        <taxon>Campylobacterota</taxon>
        <taxon>Epsilonproteobacteria</taxon>
        <taxon>Campylobacterales</taxon>
        <taxon>Campylobacteraceae</taxon>
        <taxon>Campylobacter</taxon>
    </lineage>
</organism>
<name>KHSE_CAMJJ</name>